<comment type="subcellular location">
    <subcellularLocation>
        <location evidence="1">Cytoplasm</location>
        <location evidence="1">Nucleoid</location>
    </subcellularLocation>
</comment>
<comment type="similarity">
    <text evidence="1">Belongs to the YejK family.</text>
</comment>
<evidence type="ECO:0000255" key="1">
    <source>
        <dbReference type="HAMAP-Rule" id="MF_00730"/>
    </source>
</evidence>
<keyword id="KW-0963">Cytoplasm</keyword>
<accession>Q48MF9</accession>
<proteinExistence type="inferred from homology"/>
<feature type="chain" id="PRO_1000045930" description="Nucleoid-associated protein PSPPH_1145">
    <location>
        <begin position="1"/>
        <end position="333"/>
    </location>
</feature>
<gene>
    <name type="ordered locus">PSPPH_1145</name>
</gene>
<dbReference type="EMBL" id="CP000058">
    <property type="protein sequence ID" value="AAZ34711.1"/>
    <property type="molecule type" value="Genomic_DNA"/>
</dbReference>
<dbReference type="SMR" id="Q48MF9"/>
<dbReference type="KEGG" id="psp:PSPPH_1145"/>
<dbReference type="eggNOG" id="COG3081">
    <property type="taxonomic scope" value="Bacteria"/>
</dbReference>
<dbReference type="HOGENOM" id="CLU_063050_0_1_6"/>
<dbReference type="Proteomes" id="UP000000551">
    <property type="component" value="Chromosome"/>
</dbReference>
<dbReference type="GO" id="GO:0043590">
    <property type="term" value="C:bacterial nucleoid"/>
    <property type="evidence" value="ECO:0007669"/>
    <property type="project" value="TreeGrafter"/>
</dbReference>
<dbReference type="GO" id="GO:0005737">
    <property type="term" value="C:cytoplasm"/>
    <property type="evidence" value="ECO:0007669"/>
    <property type="project" value="UniProtKB-UniRule"/>
</dbReference>
<dbReference type="GO" id="GO:0003690">
    <property type="term" value="F:double-stranded DNA binding"/>
    <property type="evidence" value="ECO:0007669"/>
    <property type="project" value="TreeGrafter"/>
</dbReference>
<dbReference type="GO" id="GO:0003727">
    <property type="term" value="F:single-stranded RNA binding"/>
    <property type="evidence" value="ECO:0007669"/>
    <property type="project" value="TreeGrafter"/>
</dbReference>
<dbReference type="HAMAP" id="MF_00730">
    <property type="entry name" value="NdpA"/>
    <property type="match status" value="1"/>
</dbReference>
<dbReference type="InterPro" id="IPR007358">
    <property type="entry name" value="Nucleoid_associated_NdpA"/>
</dbReference>
<dbReference type="NCBIfam" id="NF001557">
    <property type="entry name" value="PRK00378.1"/>
    <property type="match status" value="1"/>
</dbReference>
<dbReference type="PANTHER" id="PTHR38772">
    <property type="match status" value="1"/>
</dbReference>
<dbReference type="PANTHER" id="PTHR38772:SF1">
    <property type="entry name" value="NUCLEOID-ASSOCIATED PROTEIN YEJK"/>
    <property type="match status" value="1"/>
</dbReference>
<dbReference type="Pfam" id="PF04245">
    <property type="entry name" value="NA37"/>
    <property type="match status" value="1"/>
</dbReference>
<protein>
    <recommendedName>
        <fullName evidence="1">Nucleoid-associated protein PSPPH_1145</fullName>
    </recommendedName>
</protein>
<reference key="1">
    <citation type="journal article" date="2005" name="J. Bacteriol.">
        <title>Whole-genome sequence analysis of Pseudomonas syringae pv. phaseolicola 1448A reveals divergence among pathovars in genes involved in virulence and transposition.</title>
        <authorList>
            <person name="Joardar V."/>
            <person name="Lindeberg M."/>
            <person name="Jackson R.W."/>
            <person name="Selengut J."/>
            <person name="Dodson R."/>
            <person name="Brinkac L.M."/>
            <person name="Daugherty S.C."/>
            <person name="DeBoy R.T."/>
            <person name="Durkin A.S."/>
            <person name="Gwinn Giglio M."/>
            <person name="Madupu R."/>
            <person name="Nelson W.C."/>
            <person name="Rosovitz M.J."/>
            <person name="Sullivan S.A."/>
            <person name="Crabtree J."/>
            <person name="Creasy T."/>
            <person name="Davidsen T.M."/>
            <person name="Haft D.H."/>
            <person name="Zafar N."/>
            <person name="Zhou L."/>
            <person name="Halpin R."/>
            <person name="Holley T."/>
            <person name="Khouri H.M."/>
            <person name="Feldblyum T.V."/>
            <person name="White O."/>
            <person name="Fraser C.M."/>
            <person name="Chatterjee A.K."/>
            <person name="Cartinhour S."/>
            <person name="Schneider D."/>
            <person name="Mansfield J.W."/>
            <person name="Collmer A."/>
            <person name="Buell R."/>
        </authorList>
    </citation>
    <scope>NUCLEOTIDE SEQUENCE [LARGE SCALE GENOMIC DNA]</scope>
    <source>
        <strain>1448A / Race 6</strain>
    </source>
</reference>
<sequence>MPIRHCIVHLIDKKPDGTPAVLHARDSELAESAAIENLLADLNDSYNAKQGKAWGFFHAESGAYPFSGWLKEYFDGSQDFTSFSRVAIKHLQTLMEASNLSTGGHVLFAHYQQGMTEYLAIALLHHSEGVAVNAELDVTPSRHLDLGQLHLAARINLSEWKNNQNSKQYISFIKGKNGKKVSEYFRDFIGCQEGVDGPGETRTLLKAFSDYVEKEDLPEESAREKTQTLVDYATAQTKLGEPVTLEELSSLIDEDRPKAFYDHIRNSDYGLSPEIPADKRTLNQFRRFTGRAEGLSISFEAHLLGEKIEYDEAAGTLIIKGLPTQLIDQLKRR</sequence>
<name>NDPA_PSE14</name>
<organism>
    <name type="scientific">Pseudomonas savastanoi pv. phaseolicola (strain 1448A / Race 6)</name>
    <name type="common">Pseudomonas syringae pv. phaseolicola (strain 1448A / Race 6)</name>
    <dbReference type="NCBI Taxonomy" id="264730"/>
    <lineage>
        <taxon>Bacteria</taxon>
        <taxon>Pseudomonadati</taxon>
        <taxon>Pseudomonadota</taxon>
        <taxon>Gammaproteobacteria</taxon>
        <taxon>Pseudomonadales</taxon>
        <taxon>Pseudomonadaceae</taxon>
        <taxon>Pseudomonas</taxon>
    </lineage>
</organism>